<organism>
    <name type="scientific">Pyrococcus horikoshii (strain ATCC 700860 / DSM 12428 / JCM 9974 / NBRC 100139 / OT-3)</name>
    <dbReference type="NCBI Taxonomy" id="70601"/>
    <lineage>
        <taxon>Archaea</taxon>
        <taxon>Methanobacteriati</taxon>
        <taxon>Methanobacteriota</taxon>
        <taxon>Thermococci</taxon>
        <taxon>Thermococcales</taxon>
        <taxon>Thermococcaceae</taxon>
        <taxon>Pyrococcus</taxon>
    </lineage>
</organism>
<protein>
    <recommendedName>
        <fullName evidence="1">Pyridoxal 5'-phosphate synthase subunit PdxS</fullName>
        <shortName evidence="1">PLP synthase subunit PdxS</shortName>
        <ecNumber evidence="1">4.3.3.6</ecNumber>
    </recommendedName>
    <alternativeName>
        <fullName evidence="1">Pdx1</fullName>
    </alternativeName>
</protein>
<proteinExistence type="evidence at protein level"/>
<keyword id="KW-0002">3D-structure</keyword>
<keyword id="KW-0456">Lyase</keyword>
<keyword id="KW-0663">Pyridoxal phosphate</keyword>
<keyword id="KW-0704">Schiff base</keyword>
<dbReference type="EC" id="4.3.3.6" evidence="1"/>
<dbReference type="EMBL" id="BA000001">
    <property type="protein sequence ID" value="BAA30461.1"/>
    <property type="molecule type" value="Genomic_DNA"/>
</dbReference>
<dbReference type="PIR" id="E71007">
    <property type="entry name" value="E71007"/>
</dbReference>
<dbReference type="RefSeq" id="WP_010885443.1">
    <property type="nucleotide sequence ID" value="NC_000961.1"/>
</dbReference>
<dbReference type="PDB" id="4FIQ">
    <property type="method" value="X-ray"/>
    <property type="resolution" value="2.70 A"/>
    <property type="chains" value="A/B/C/D/E/F=1-335"/>
</dbReference>
<dbReference type="PDB" id="4FIR">
    <property type="method" value="X-ray"/>
    <property type="resolution" value="3.10 A"/>
    <property type="chains" value="A/B/C/D/E/F=1-335"/>
</dbReference>
<dbReference type="PDBsum" id="4FIQ"/>
<dbReference type="PDBsum" id="4FIR"/>
<dbReference type="SMR" id="O59080"/>
<dbReference type="IntAct" id="O59080">
    <property type="interactions" value="1"/>
</dbReference>
<dbReference type="MINT" id="O59080"/>
<dbReference type="STRING" id="70601.gene:9378331"/>
<dbReference type="EnsemblBacteria" id="BAA30461">
    <property type="protein sequence ID" value="BAA30461"/>
    <property type="gene ID" value="BAA30461"/>
</dbReference>
<dbReference type="GeneID" id="1443680"/>
<dbReference type="KEGG" id="pho:PH1355"/>
<dbReference type="eggNOG" id="arCOG04075">
    <property type="taxonomic scope" value="Archaea"/>
</dbReference>
<dbReference type="OrthoDB" id="6840at2157"/>
<dbReference type="BRENDA" id="4.3.3.6">
    <property type="organism ID" value="5244"/>
</dbReference>
<dbReference type="UniPathway" id="UPA00245"/>
<dbReference type="EvolutionaryTrace" id="O59080"/>
<dbReference type="Proteomes" id="UP000000752">
    <property type="component" value="Chromosome"/>
</dbReference>
<dbReference type="GO" id="GO:0036381">
    <property type="term" value="F:pyridoxal 5'-phosphate synthase (glutamine hydrolysing) activity"/>
    <property type="evidence" value="ECO:0007669"/>
    <property type="project" value="UniProtKB-UniRule"/>
</dbReference>
<dbReference type="GO" id="GO:0006520">
    <property type="term" value="P:amino acid metabolic process"/>
    <property type="evidence" value="ECO:0007669"/>
    <property type="project" value="TreeGrafter"/>
</dbReference>
<dbReference type="GO" id="GO:0042823">
    <property type="term" value="P:pyridoxal phosphate biosynthetic process"/>
    <property type="evidence" value="ECO:0007669"/>
    <property type="project" value="UniProtKB-UniRule"/>
</dbReference>
<dbReference type="GO" id="GO:0008615">
    <property type="term" value="P:pyridoxine biosynthetic process"/>
    <property type="evidence" value="ECO:0007669"/>
    <property type="project" value="TreeGrafter"/>
</dbReference>
<dbReference type="CDD" id="cd04727">
    <property type="entry name" value="pdxS"/>
    <property type="match status" value="1"/>
</dbReference>
<dbReference type="FunFam" id="3.20.20.70:FF:000406">
    <property type="entry name" value="Pyridoxal 5'-phosphate synthase subunit PdxS"/>
    <property type="match status" value="1"/>
</dbReference>
<dbReference type="Gene3D" id="3.20.20.70">
    <property type="entry name" value="Aldolase class I"/>
    <property type="match status" value="1"/>
</dbReference>
<dbReference type="HAMAP" id="MF_01824">
    <property type="entry name" value="PdxS"/>
    <property type="match status" value="1"/>
</dbReference>
<dbReference type="InterPro" id="IPR013785">
    <property type="entry name" value="Aldolase_TIM"/>
</dbReference>
<dbReference type="InterPro" id="IPR001852">
    <property type="entry name" value="PdxS/SNZ"/>
</dbReference>
<dbReference type="InterPro" id="IPR033755">
    <property type="entry name" value="PdxS/SNZ_N"/>
</dbReference>
<dbReference type="InterPro" id="IPR011060">
    <property type="entry name" value="RibuloseP-bd_barrel"/>
</dbReference>
<dbReference type="InterPro" id="IPR033983">
    <property type="entry name" value="Thiazole_synthase_ThiG"/>
</dbReference>
<dbReference type="NCBIfam" id="NF003215">
    <property type="entry name" value="PRK04180.1"/>
    <property type="match status" value="1"/>
</dbReference>
<dbReference type="NCBIfam" id="TIGR00343">
    <property type="entry name" value="pyridoxal 5'-phosphate synthase lyase subunit PdxS"/>
    <property type="match status" value="1"/>
</dbReference>
<dbReference type="PANTHER" id="PTHR31829">
    <property type="entry name" value="PYRIDOXAL 5'-PHOSPHATE SYNTHASE SUBUNIT SNZ1-RELATED"/>
    <property type="match status" value="1"/>
</dbReference>
<dbReference type="PANTHER" id="PTHR31829:SF0">
    <property type="entry name" value="PYRIDOXAL 5'-PHOSPHATE SYNTHASE SUBUNIT SNZ1-RELATED"/>
    <property type="match status" value="1"/>
</dbReference>
<dbReference type="Pfam" id="PF01680">
    <property type="entry name" value="SOR_SNZ"/>
    <property type="match status" value="1"/>
</dbReference>
<dbReference type="Pfam" id="PF05690">
    <property type="entry name" value="ThiG"/>
    <property type="match status" value="1"/>
</dbReference>
<dbReference type="PIRSF" id="PIRSF029271">
    <property type="entry name" value="Pdx1"/>
    <property type="match status" value="1"/>
</dbReference>
<dbReference type="SUPFAM" id="SSF51366">
    <property type="entry name" value="Ribulose-phoshate binding barrel"/>
    <property type="match status" value="1"/>
</dbReference>
<dbReference type="PROSITE" id="PS01235">
    <property type="entry name" value="PDXS_SNZ_1"/>
    <property type="match status" value="1"/>
</dbReference>
<dbReference type="PROSITE" id="PS51129">
    <property type="entry name" value="PDXS_SNZ_2"/>
    <property type="match status" value="1"/>
</dbReference>
<name>PDXS_PYRHO</name>
<reference key="1">
    <citation type="journal article" date="1998" name="DNA Res.">
        <title>Complete sequence and gene organization of the genome of a hyper-thermophilic archaebacterium, Pyrococcus horikoshii OT3.</title>
        <authorList>
            <person name="Kawarabayasi Y."/>
            <person name="Sawada M."/>
            <person name="Horikawa H."/>
            <person name="Haikawa Y."/>
            <person name="Hino Y."/>
            <person name="Yamamoto S."/>
            <person name="Sekine M."/>
            <person name="Baba S."/>
            <person name="Kosugi H."/>
            <person name="Hosoyama A."/>
            <person name="Nagai Y."/>
            <person name="Sakai M."/>
            <person name="Ogura K."/>
            <person name="Otsuka R."/>
            <person name="Nakazawa H."/>
            <person name="Takamiya M."/>
            <person name="Ohfuku Y."/>
            <person name="Funahashi T."/>
            <person name="Tanaka T."/>
            <person name="Kudoh Y."/>
            <person name="Yamazaki J."/>
            <person name="Kushida N."/>
            <person name="Oguchi A."/>
            <person name="Aoki K."/>
            <person name="Yoshizawa T."/>
            <person name="Nakamura Y."/>
            <person name="Robb F.T."/>
            <person name="Horikoshi K."/>
            <person name="Masuchi Y."/>
            <person name="Shizuya H."/>
            <person name="Kikuchi H."/>
        </authorList>
    </citation>
    <scope>NUCLEOTIDE SEQUENCE [LARGE SCALE GENOMIC DNA]</scope>
    <source>
        <strain>ATCC 700860 / DSM 12428 / JCM 9974 / NBRC 100139 / OT-3</strain>
    </source>
</reference>
<reference key="2">
    <citation type="journal article" date="2012" name="Mol. Cells">
        <title>Crystal structure of pyridoxal biosynthesis lyase PdxS from Pyrococcus horikoshii.</title>
        <authorList>
            <person name="Matsuura A."/>
            <person name="Yoon J.Y."/>
            <person name="Yoon H.J."/>
            <person name="Lee H.H."/>
            <person name="Suh S.W."/>
        </authorList>
    </citation>
    <scope>X-RAY CRYSTALLOGRAPHY (2.70 ANGSTROMS) OF APOENZYME AND IN COMPLEX WITH RIBOSE 5-PHOSPHATE</scope>
    <scope>ACTIVE SITE</scope>
    <scope>SUBUNIT</scope>
</reference>
<feature type="chain" id="PRO_0000109445" description="Pyridoxal 5'-phosphate synthase subunit PdxS">
    <location>
        <begin position="1"/>
        <end position="335"/>
    </location>
</feature>
<feature type="active site" description="Schiff-base intermediate with D-ribose 5-phosphate" evidence="1 2">
    <location>
        <position position="87"/>
    </location>
</feature>
<feature type="binding site" evidence="1 2">
    <location>
        <position position="30"/>
    </location>
    <ligand>
        <name>D-ribose 5-phosphate</name>
        <dbReference type="ChEBI" id="CHEBI:78346"/>
    </ligand>
</feature>
<feature type="binding site" evidence="1 2">
    <location>
        <position position="159"/>
    </location>
    <ligand>
        <name>D-ribose 5-phosphate</name>
        <dbReference type="ChEBI" id="CHEBI:78346"/>
    </ligand>
</feature>
<feature type="binding site" evidence="1">
    <location>
        <position position="171"/>
    </location>
    <ligand>
        <name>D-glyceraldehyde 3-phosphate</name>
        <dbReference type="ChEBI" id="CHEBI:59776"/>
    </ligand>
</feature>
<feature type="binding site" evidence="1 2">
    <location>
        <position position="257"/>
    </location>
    <ligand>
        <name>D-ribose 5-phosphate</name>
        <dbReference type="ChEBI" id="CHEBI:78346"/>
    </ligand>
</feature>
<feature type="binding site" evidence="1 2">
    <location>
        <begin position="278"/>
        <end position="279"/>
    </location>
    <ligand>
        <name>D-ribose 5-phosphate</name>
        <dbReference type="ChEBI" id="CHEBI:78346"/>
    </ligand>
</feature>
<feature type="helix" evidence="3">
    <location>
        <begin position="3"/>
        <end position="21"/>
    </location>
</feature>
<feature type="turn" evidence="3">
    <location>
        <begin position="22"/>
        <end position="25"/>
    </location>
</feature>
<feature type="strand" evidence="3">
    <location>
        <begin position="26"/>
        <end position="33"/>
    </location>
</feature>
<feature type="helix" evidence="3">
    <location>
        <begin position="34"/>
        <end position="43"/>
    </location>
</feature>
<feature type="strand" evidence="3">
    <location>
        <begin position="46"/>
        <end position="50"/>
    </location>
</feature>
<feature type="helix" evidence="3">
    <location>
        <begin position="55"/>
        <end position="60"/>
    </location>
</feature>
<feature type="helix" evidence="3">
    <location>
        <begin position="70"/>
        <end position="77"/>
    </location>
</feature>
<feature type="strand" evidence="3">
    <location>
        <begin position="84"/>
        <end position="89"/>
    </location>
</feature>
<feature type="helix" evidence="3">
    <location>
        <begin position="93"/>
        <end position="102"/>
    </location>
</feature>
<feature type="strand" evidence="3">
    <location>
        <begin position="105"/>
        <end position="113"/>
    </location>
</feature>
<feature type="helix" evidence="3">
    <location>
        <begin position="124"/>
        <end position="126"/>
    </location>
</feature>
<feature type="strand" evidence="3">
    <location>
        <begin position="131"/>
        <end position="137"/>
    </location>
</feature>
<feature type="helix" evidence="3">
    <location>
        <begin position="138"/>
        <end position="147"/>
    </location>
</feature>
<feature type="strand" evidence="3">
    <location>
        <begin position="150"/>
        <end position="154"/>
    </location>
</feature>
<feature type="helix" evidence="3">
    <location>
        <begin position="164"/>
        <end position="181"/>
    </location>
</feature>
<feature type="helix" evidence="3">
    <location>
        <begin position="185"/>
        <end position="195"/>
    </location>
</feature>
<feature type="helix" evidence="3">
    <location>
        <begin position="197"/>
        <end position="200"/>
    </location>
</feature>
<feature type="helix" evidence="3">
    <location>
        <begin position="201"/>
        <end position="209"/>
    </location>
</feature>
<feature type="strand" evidence="3">
    <location>
        <begin position="221"/>
        <end position="223"/>
    </location>
</feature>
<feature type="helix" evidence="3">
    <location>
        <begin position="228"/>
        <end position="245"/>
    </location>
</feature>
<feature type="strand" evidence="3">
    <location>
        <begin position="249"/>
        <end position="254"/>
    </location>
</feature>
<feature type="helix" evidence="3">
    <location>
        <begin position="261"/>
        <end position="269"/>
    </location>
</feature>
<feature type="strand" evidence="3">
    <location>
        <begin position="273"/>
        <end position="277"/>
    </location>
</feature>
<feature type="helix" evidence="3">
    <location>
        <begin position="279"/>
        <end position="282"/>
    </location>
</feature>
<feature type="strand" evidence="3">
    <location>
        <begin position="283"/>
        <end position="285"/>
    </location>
</feature>
<feature type="helix" evidence="3">
    <location>
        <begin position="287"/>
        <end position="299"/>
    </location>
</feature>
<feature type="turn" evidence="4">
    <location>
        <begin position="300"/>
        <end position="302"/>
    </location>
</feature>
<feature type="helix" evidence="3">
    <location>
        <begin position="304"/>
        <end position="312"/>
    </location>
</feature>
<comment type="function">
    <text evidence="1">Catalyzes the formation of pyridoxal 5'-phosphate from ribose 5-phosphate (RBP), glyceraldehyde 3-phosphate (G3P) and ammonia. The ammonia is provided by the PdxT subunit. Can also use ribulose 5-phosphate and dihydroxyacetone phosphate as substrates, resulting from enzyme-catalyzed isomerization of RBP and G3P, respectively.</text>
</comment>
<comment type="catalytic activity">
    <reaction evidence="1">
        <text>aldehydo-D-ribose 5-phosphate + D-glyceraldehyde 3-phosphate + L-glutamine = pyridoxal 5'-phosphate + L-glutamate + phosphate + 3 H2O + H(+)</text>
        <dbReference type="Rhea" id="RHEA:31507"/>
        <dbReference type="ChEBI" id="CHEBI:15377"/>
        <dbReference type="ChEBI" id="CHEBI:15378"/>
        <dbReference type="ChEBI" id="CHEBI:29985"/>
        <dbReference type="ChEBI" id="CHEBI:43474"/>
        <dbReference type="ChEBI" id="CHEBI:58273"/>
        <dbReference type="ChEBI" id="CHEBI:58359"/>
        <dbReference type="ChEBI" id="CHEBI:59776"/>
        <dbReference type="ChEBI" id="CHEBI:597326"/>
        <dbReference type="EC" id="4.3.3.6"/>
    </reaction>
</comment>
<comment type="pathway">
    <text evidence="1">Cofactor biosynthesis; pyridoxal 5'-phosphate biosynthesis.</text>
</comment>
<comment type="subunit">
    <text evidence="1 2">Homohexamer. In the presence of PdxT, forms a dodecamer of heterodimers.</text>
</comment>
<comment type="similarity">
    <text evidence="1">Belongs to the PdxS/SNZ family.</text>
</comment>
<gene>
    <name evidence="1" type="primary">pdxS</name>
    <name type="ordered locus">PH1355</name>
</gene>
<evidence type="ECO:0000255" key="1">
    <source>
        <dbReference type="HAMAP-Rule" id="MF_01824"/>
    </source>
</evidence>
<evidence type="ECO:0000269" key="2">
    <source>
    </source>
</evidence>
<evidence type="ECO:0007829" key="3">
    <source>
        <dbReference type="PDB" id="4FIQ"/>
    </source>
</evidence>
<evidence type="ECO:0007829" key="4">
    <source>
        <dbReference type="PDB" id="4FIR"/>
    </source>
</evidence>
<sequence length="335" mass="37014">MDKLKIIMEKGTERLKRGFAKMVKGGVIMDVTNAEQARIAEEAGAVAVMALHKVPADIRKAGGVARMAPVEKIQEIMDAVTIPVMAKCRIGHEAEARILEALGVDMIDESEVLTPADPFFHIYKKKFTAPFVCGARNLGEAVRRIWEGAAMIRTKGEAGTGNIIEAVRHVRLVNENIRLIQRMTDEEIYGVAEKFAEPYLRLAFSVKEISGLPKRVLENEPIYEGFTYREIVEDIYKILLEIKKLGRLPVVNFAAGGVATPADAALMMAMGMDGVFVGSGIFKSSNPPKMARAIVEAVNHWDEPDVLAEISREIGEPMRGQAIEELQVRMEERGI</sequence>
<accession>O59080</accession>